<protein>
    <recommendedName>
        <fullName evidence="1">Methionyl-tRNA formyltransferase</fullName>
        <ecNumber evidence="1">2.1.2.9</ecNumber>
    </recommendedName>
</protein>
<keyword id="KW-0648">Protein biosynthesis</keyword>
<keyword id="KW-0808">Transferase</keyword>
<feature type="chain" id="PRO_0000083029" description="Methionyl-tRNA formyltransferase">
    <location>
        <begin position="1"/>
        <end position="303"/>
    </location>
</feature>
<feature type="binding site" evidence="1">
    <location>
        <begin position="108"/>
        <end position="111"/>
    </location>
    <ligand>
        <name>(6S)-5,6,7,8-tetrahydrofolate</name>
        <dbReference type="ChEBI" id="CHEBI:57453"/>
    </ligand>
</feature>
<evidence type="ECO:0000255" key="1">
    <source>
        <dbReference type="HAMAP-Rule" id="MF_00182"/>
    </source>
</evidence>
<evidence type="ECO:0000305" key="2"/>
<proteinExistence type="inferred from homology"/>
<dbReference type="EC" id="2.1.2.9" evidence="1"/>
<dbReference type="EMBL" id="AE006914">
    <property type="protein sequence ID" value="AAL02817.1"/>
    <property type="molecule type" value="Genomic_DNA"/>
</dbReference>
<dbReference type="EMBL" id="Y13122">
    <property type="protein sequence ID" value="CAA73589.1"/>
    <property type="molecule type" value="Genomic_DNA"/>
</dbReference>
<dbReference type="PIR" id="G97734">
    <property type="entry name" value="G97734"/>
</dbReference>
<dbReference type="RefSeq" id="WP_010976939.1">
    <property type="nucleotide sequence ID" value="NC_003103.1"/>
</dbReference>
<dbReference type="SMR" id="O33519"/>
<dbReference type="GeneID" id="927898"/>
<dbReference type="KEGG" id="rco:RC0279"/>
<dbReference type="PATRIC" id="fig|272944.4.peg.319"/>
<dbReference type="HOGENOM" id="CLU_033347_1_1_5"/>
<dbReference type="Proteomes" id="UP000000816">
    <property type="component" value="Chromosome"/>
</dbReference>
<dbReference type="GO" id="GO:0005829">
    <property type="term" value="C:cytosol"/>
    <property type="evidence" value="ECO:0007669"/>
    <property type="project" value="TreeGrafter"/>
</dbReference>
<dbReference type="GO" id="GO:0004479">
    <property type="term" value="F:methionyl-tRNA formyltransferase activity"/>
    <property type="evidence" value="ECO:0007669"/>
    <property type="project" value="UniProtKB-UniRule"/>
</dbReference>
<dbReference type="CDD" id="cd08646">
    <property type="entry name" value="FMT_core_Met-tRNA-FMT_N"/>
    <property type="match status" value="1"/>
</dbReference>
<dbReference type="CDD" id="cd08704">
    <property type="entry name" value="Met_tRNA_FMT_C"/>
    <property type="match status" value="1"/>
</dbReference>
<dbReference type="Gene3D" id="3.40.50.12230">
    <property type="match status" value="1"/>
</dbReference>
<dbReference type="HAMAP" id="MF_00182">
    <property type="entry name" value="Formyl_trans"/>
    <property type="match status" value="1"/>
</dbReference>
<dbReference type="InterPro" id="IPR005794">
    <property type="entry name" value="Fmt"/>
</dbReference>
<dbReference type="InterPro" id="IPR005793">
    <property type="entry name" value="Formyl_trans_C"/>
</dbReference>
<dbReference type="InterPro" id="IPR002376">
    <property type="entry name" value="Formyl_transf_N"/>
</dbReference>
<dbReference type="InterPro" id="IPR036477">
    <property type="entry name" value="Formyl_transf_N_sf"/>
</dbReference>
<dbReference type="InterPro" id="IPR011034">
    <property type="entry name" value="Formyl_transferase-like_C_sf"/>
</dbReference>
<dbReference type="InterPro" id="IPR044135">
    <property type="entry name" value="Met-tRNA-FMT_C"/>
</dbReference>
<dbReference type="InterPro" id="IPR041711">
    <property type="entry name" value="Met-tRNA-FMT_N"/>
</dbReference>
<dbReference type="NCBIfam" id="TIGR00460">
    <property type="entry name" value="fmt"/>
    <property type="match status" value="1"/>
</dbReference>
<dbReference type="PANTHER" id="PTHR11138">
    <property type="entry name" value="METHIONYL-TRNA FORMYLTRANSFERASE"/>
    <property type="match status" value="1"/>
</dbReference>
<dbReference type="PANTHER" id="PTHR11138:SF5">
    <property type="entry name" value="METHIONYL-TRNA FORMYLTRANSFERASE, MITOCHONDRIAL"/>
    <property type="match status" value="1"/>
</dbReference>
<dbReference type="Pfam" id="PF02911">
    <property type="entry name" value="Formyl_trans_C"/>
    <property type="match status" value="1"/>
</dbReference>
<dbReference type="Pfam" id="PF00551">
    <property type="entry name" value="Formyl_trans_N"/>
    <property type="match status" value="1"/>
</dbReference>
<dbReference type="SUPFAM" id="SSF50486">
    <property type="entry name" value="FMT C-terminal domain-like"/>
    <property type="match status" value="1"/>
</dbReference>
<dbReference type="SUPFAM" id="SSF53328">
    <property type="entry name" value="Formyltransferase"/>
    <property type="match status" value="1"/>
</dbReference>
<gene>
    <name evidence="1" type="primary">fmt</name>
    <name type="ordered locus">RC0279</name>
</gene>
<comment type="function">
    <text evidence="1">Attaches a formyl group to the free amino group of methionyl-tRNA(fMet). The formyl group appears to play a dual role in the initiator identity of N-formylmethionyl-tRNA by promoting its recognition by IF2 and preventing the misappropriation of this tRNA by the elongation apparatus.</text>
</comment>
<comment type="catalytic activity">
    <reaction evidence="1">
        <text>L-methionyl-tRNA(fMet) + (6R)-10-formyltetrahydrofolate = N-formyl-L-methionyl-tRNA(fMet) + (6S)-5,6,7,8-tetrahydrofolate + H(+)</text>
        <dbReference type="Rhea" id="RHEA:24380"/>
        <dbReference type="Rhea" id="RHEA-COMP:9952"/>
        <dbReference type="Rhea" id="RHEA-COMP:9953"/>
        <dbReference type="ChEBI" id="CHEBI:15378"/>
        <dbReference type="ChEBI" id="CHEBI:57453"/>
        <dbReference type="ChEBI" id="CHEBI:78530"/>
        <dbReference type="ChEBI" id="CHEBI:78844"/>
        <dbReference type="ChEBI" id="CHEBI:195366"/>
        <dbReference type="EC" id="2.1.2.9"/>
    </reaction>
</comment>
<comment type="similarity">
    <text evidence="1 2">Belongs to the Fmt family.</text>
</comment>
<reference key="1">
    <citation type="journal article" date="2001" name="Science">
        <title>Mechanisms of evolution in Rickettsia conorii and R. prowazekii.</title>
        <authorList>
            <person name="Ogata H."/>
            <person name="Audic S."/>
            <person name="Renesto-Audiffren P."/>
            <person name="Fournier P.-E."/>
            <person name="Barbe V."/>
            <person name="Samson D."/>
            <person name="Roux V."/>
            <person name="Cossart P."/>
            <person name="Weissenbach J."/>
            <person name="Claverie J.-M."/>
            <person name="Raoult D."/>
        </authorList>
    </citation>
    <scope>NUCLEOTIDE SEQUENCE [LARGE SCALE GENOMIC DNA]</scope>
    <source>
        <strain>ATCC VR-613 / Malish 7</strain>
    </source>
</reference>
<reference key="2">
    <citation type="submission" date="1997-05" db="EMBL/GenBank/DDBJ databases">
        <title>Rearrangement of the rRNA genes in Rickettsia preceeded the divergence of the typhus and the spotted fever group Rickettsia.</title>
        <authorList>
            <person name="Andersson S.G.E."/>
            <person name="Stothard D.R."/>
            <person name="Romedenne M."/>
            <person name="Viseur N."/>
            <person name="Fuerst P."/>
            <person name="Kurland C.G."/>
        </authorList>
    </citation>
    <scope>NUCLEOTIDE SEQUENCE [GENOMIC DNA] OF 231-303</scope>
</reference>
<name>FMT_RICCN</name>
<organism>
    <name type="scientific">Rickettsia conorii (strain ATCC VR-613 / Malish 7)</name>
    <dbReference type="NCBI Taxonomy" id="272944"/>
    <lineage>
        <taxon>Bacteria</taxon>
        <taxon>Pseudomonadati</taxon>
        <taxon>Pseudomonadota</taxon>
        <taxon>Alphaproteobacteria</taxon>
        <taxon>Rickettsiales</taxon>
        <taxon>Rickettsiaceae</taxon>
        <taxon>Rickettsieae</taxon>
        <taxon>Rickettsia</taxon>
        <taxon>spotted fever group</taxon>
    </lineage>
</organism>
<sequence length="303" mass="34001">MKVIFMGTPEFAVPALKKLITHHEVKAVFTQQPKAKGRGLNLAKSPIHQLAFEHQIPVYTPSTLRNDEIINLINKVNADIIVVIAYGFIVPKAILEAKKYGCLNIHPSDLPRHRGAAPLQRTIIEGDRKSSVCIMRMDTGLDTGDILMKEDFDLEERITLEELHNKCANLGAELLIKTLANIDNIVPITQPSDGVTYAHKLTKEEGKINWHESAYKIDCKIRGMNPWPGAYFSYNDKIIKILEAEYLNADHHFTSGTVISDKLEIACGSGILRVKKLQQESKKALNIEEFLRGTNILKDTVLK</sequence>
<accession>O33519</accession>